<organism>
    <name type="scientific">Chromobacterium violaceum (strain ATCC 12472 / DSM 30191 / JCM 1249 / CCUG 213 / NBRC 12614 / NCIMB 9131 / NCTC 9757 / MK)</name>
    <dbReference type="NCBI Taxonomy" id="243365"/>
    <lineage>
        <taxon>Bacteria</taxon>
        <taxon>Pseudomonadati</taxon>
        <taxon>Pseudomonadota</taxon>
        <taxon>Betaproteobacteria</taxon>
        <taxon>Neisseriales</taxon>
        <taxon>Chromobacteriaceae</taxon>
        <taxon>Chromobacterium</taxon>
    </lineage>
</organism>
<accession>Q7P0J4</accession>
<dbReference type="EMBL" id="AE016825">
    <property type="protein sequence ID" value="AAQ58249.1"/>
    <property type="molecule type" value="Genomic_DNA"/>
</dbReference>
<dbReference type="RefSeq" id="WP_011134128.1">
    <property type="nucleotide sequence ID" value="NC_005085.1"/>
</dbReference>
<dbReference type="STRING" id="243365.CV_0573"/>
<dbReference type="GeneID" id="66365522"/>
<dbReference type="KEGG" id="cvi:CV_0573"/>
<dbReference type="eggNOG" id="COG3158">
    <property type="taxonomic scope" value="Bacteria"/>
</dbReference>
<dbReference type="HOGENOM" id="CLU_008142_4_2_4"/>
<dbReference type="OrthoDB" id="9805577at2"/>
<dbReference type="Proteomes" id="UP000001424">
    <property type="component" value="Chromosome"/>
</dbReference>
<dbReference type="GO" id="GO:0005886">
    <property type="term" value="C:plasma membrane"/>
    <property type="evidence" value="ECO:0007669"/>
    <property type="project" value="UniProtKB-SubCell"/>
</dbReference>
<dbReference type="GO" id="GO:0015079">
    <property type="term" value="F:potassium ion transmembrane transporter activity"/>
    <property type="evidence" value="ECO:0007669"/>
    <property type="project" value="UniProtKB-UniRule"/>
</dbReference>
<dbReference type="GO" id="GO:0015293">
    <property type="term" value="F:symporter activity"/>
    <property type="evidence" value="ECO:0007669"/>
    <property type="project" value="UniProtKB-UniRule"/>
</dbReference>
<dbReference type="HAMAP" id="MF_01522">
    <property type="entry name" value="Kup"/>
    <property type="match status" value="1"/>
</dbReference>
<dbReference type="InterPro" id="IPR003855">
    <property type="entry name" value="K+_transporter"/>
</dbReference>
<dbReference type="InterPro" id="IPR053952">
    <property type="entry name" value="K_trans_C"/>
</dbReference>
<dbReference type="InterPro" id="IPR053951">
    <property type="entry name" value="K_trans_N"/>
</dbReference>
<dbReference type="InterPro" id="IPR023051">
    <property type="entry name" value="Kup"/>
</dbReference>
<dbReference type="NCBIfam" id="NF008015">
    <property type="entry name" value="PRK10745.1"/>
    <property type="match status" value="1"/>
</dbReference>
<dbReference type="PANTHER" id="PTHR30540:SF79">
    <property type="entry name" value="LOW AFFINITY POTASSIUM TRANSPORT SYSTEM PROTEIN KUP"/>
    <property type="match status" value="1"/>
</dbReference>
<dbReference type="PANTHER" id="PTHR30540">
    <property type="entry name" value="OSMOTIC STRESS POTASSIUM TRANSPORTER"/>
    <property type="match status" value="1"/>
</dbReference>
<dbReference type="Pfam" id="PF02705">
    <property type="entry name" value="K_trans"/>
    <property type="match status" value="1"/>
</dbReference>
<dbReference type="Pfam" id="PF22776">
    <property type="entry name" value="K_trans_C"/>
    <property type="match status" value="1"/>
</dbReference>
<sequence>MQDHNKKAMAGLTLAALGVVYGDIGTSPLYTLRECFVSQNLPTTPDNIFGILSLIFWSLIFVVSVKYVAFVLRADNRGEGGIMALMALARHYTTHAARWKIVLLGLFGAALFYGDAIITPAVSVLSAAEGMEVVSSGMEAYVLPMAVGVLVGLFLLQRHGTARVGLMFGPVMMVWFAILGILGLHQIIQQPAVLQALNPWHAVTFLSQHGFHAFLTLGSVVLALTGAEALYADMGHFGKTPIRRAWFSLVLPGLGLNYFGQGALLMSNPAAIKNPFFLLAPDWALLPMIALATLATVIASQAVISGAYSLTRQAILLGYCPRLEVHHTSDKEIGQIYMPFINWALLVAVLVVVLTFKNSSSLAAAYGIAVTGTMLITTMLFFVVARVNWRWPLPLALGITLLFGVIDTAFFAANVHKVADGGWLPLVMGMAIFTLMSTWKQGRDILFKRLREQALPLDDFIHNLEAYPPARVEGTAVFLTSTLHGVPHALLHNLKHNKVLHERVVLMTVRTEDIPYVPEDERLEIVQMSASFWRVMARYGFKEEPNVVEVLDKCAKEGFEMELMDTSFFLSRETIVSTGHPGMARWRQKIFLWMSKNALRATDFFQVPTNRVVELGAQVEL</sequence>
<proteinExistence type="inferred from homology"/>
<reference key="1">
    <citation type="journal article" date="2003" name="Proc. Natl. Acad. Sci. U.S.A.">
        <title>The complete genome sequence of Chromobacterium violaceum reveals remarkable and exploitable bacterial adaptability.</title>
        <authorList>
            <person name="Vasconcelos A.T.R."/>
            <person name="de Almeida D.F."/>
            <person name="Hungria M."/>
            <person name="Guimaraes C.T."/>
            <person name="Antonio R.V."/>
            <person name="Almeida F.C."/>
            <person name="de Almeida L.G.P."/>
            <person name="de Almeida R."/>
            <person name="Alves-Gomes J.A."/>
            <person name="Andrade E.M."/>
            <person name="Araripe J."/>
            <person name="de Araujo M.F.F."/>
            <person name="Astolfi-Filho S."/>
            <person name="Azevedo V."/>
            <person name="Baptista A.J."/>
            <person name="Bataus L.A.M."/>
            <person name="Batista J.S."/>
            <person name="Belo A."/>
            <person name="van den Berg C."/>
            <person name="Bogo M."/>
            <person name="Bonatto S."/>
            <person name="Bordignon J."/>
            <person name="Brigido M.M."/>
            <person name="Brito C.A."/>
            <person name="Brocchi M."/>
            <person name="Burity H.A."/>
            <person name="Camargo A.A."/>
            <person name="Cardoso D.D.P."/>
            <person name="Carneiro N.P."/>
            <person name="Carraro D.M."/>
            <person name="Carvalho C.M.B."/>
            <person name="Cascardo J.C.M."/>
            <person name="Cavada B.S."/>
            <person name="Chueire L.M.O."/>
            <person name="Creczynski-Pasa T.B."/>
            <person name="Cunha-Junior N.C."/>
            <person name="Fagundes N."/>
            <person name="Falcao C.L."/>
            <person name="Fantinatti F."/>
            <person name="Farias I.P."/>
            <person name="Felipe M.S.S."/>
            <person name="Ferrari L.P."/>
            <person name="Ferro J.A."/>
            <person name="Ferro M.I.T."/>
            <person name="Franco G.R."/>
            <person name="Freitas N.S.A."/>
            <person name="Furlan L.R."/>
            <person name="Gazzinelli R.T."/>
            <person name="Gomes E.A."/>
            <person name="Goncalves P.R."/>
            <person name="Grangeiro T.B."/>
            <person name="Grattapaglia D."/>
            <person name="Grisard E.C."/>
            <person name="Hanna E.S."/>
            <person name="Jardim S.N."/>
            <person name="Laurino J."/>
            <person name="Leoi L.C.T."/>
            <person name="Lima L.F.A."/>
            <person name="Loureiro M.F."/>
            <person name="Lyra M.C.C.P."/>
            <person name="Madeira H.M.F."/>
            <person name="Manfio G.P."/>
            <person name="Maranhao A.Q."/>
            <person name="Martins W.S."/>
            <person name="di Mauro S.M.Z."/>
            <person name="de Medeiros S.R.B."/>
            <person name="Meissner R.V."/>
            <person name="Moreira M.A.M."/>
            <person name="Nascimento F.F."/>
            <person name="Nicolas M.F."/>
            <person name="Oliveira J.G."/>
            <person name="Oliveira S.C."/>
            <person name="Paixao R.F.C."/>
            <person name="Parente J.A."/>
            <person name="Pedrosa F.O."/>
            <person name="Pena S.D.J."/>
            <person name="Pereira J.O."/>
            <person name="Pereira M."/>
            <person name="Pinto L.S.R.C."/>
            <person name="Pinto L.S."/>
            <person name="Porto J.I.R."/>
            <person name="Potrich D.P."/>
            <person name="Ramalho-Neto C.E."/>
            <person name="Reis A.M.M."/>
            <person name="Rigo L.U."/>
            <person name="Rondinelli E."/>
            <person name="Santos E.B.P."/>
            <person name="Santos F.R."/>
            <person name="Schneider M.P.C."/>
            <person name="Seuanez H.N."/>
            <person name="Silva A.M.R."/>
            <person name="da Silva A.L.C."/>
            <person name="Silva D.W."/>
            <person name="Silva R."/>
            <person name="Simoes I.C."/>
            <person name="Simon D."/>
            <person name="Soares C.M.A."/>
            <person name="Soares R.B.A."/>
            <person name="Souza E.M."/>
            <person name="Souza K.R.L."/>
            <person name="Souza R.C."/>
            <person name="Steffens M.B.R."/>
            <person name="Steindel M."/>
            <person name="Teixeira S.R."/>
            <person name="Urmenyi T."/>
            <person name="Vettore A."/>
            <person name="Wassem R."/>
            <person name="Zaha A."/>
            <person name="Simpson A.J.G."/>
        </authorList>
    </citation>
    <scope>NUCLEOTIDE SEQUENCE [LARGE SCALE GENOMIC DNA]</scope>
    <source>
        <strain>ATCC 12472 / DSM 30191 / JCM 1249 / CCUG 213 / NBRC 12614 / NCIMB 9131 / NCTC 9757 / MK</strain>
    </source>
</reference>
<gene>
    <name evidence="1" type="primary">kup2</name>
    <name type="ordered locus">CV_0573</name>
</gene>
<evidence type="ECO:0000255" key="1">
    <source>
        <dbReference type="HAMAP-Rule" id="MF_01522"/>
    </source>
</evidence>
<comment type="function">
    <text evidence="1">Transport of potassium into the cell. Likely operates as a K(+):H(+) symporter.</text>
</comment>
<comment type="catalytic activity">
    <reaction evidence="1">
        <text>K(+)(in) + H(+)(in) = K(+)(out) + H(+)(out)</text>
        <dbReference type="Rhea" id="RHEA:28490"/>
        <dbReference type="ChEBI" id="CHEBI:15378"/>
        <dbReference type="ChEBI" id="CHEBI:29103"/>
    </reaction>
    <physiologicalReaction direction="right-to-left" evidence="1">
        <dbReference type="Rhea" id="RHEA:28492"/>
    </physiologicalReaction>
</comment>
<comment type="subcellular location">
    <subcellularLocation>
        <location evidence="1">Cell inner membrane</location>
        <topology evidence="1">Multi-pass membrane protein</topology>
    </subcellularLocation>
</comment>
<comment type="similarity">
    <text evidence="1">Belongs to the HAK/KUP transporter (TC 2.A.72) family.</text>
</comment>
<protein>
    <recommendedName>
        <fullName evidence="1">Probable potassium transport system protein Kup 2</fullName>
    </recommendedName>
</protein>
<name>KUP2_CHRVO</name>
<feature type="chain" id="PRO_0000209009" description="Probable potassium transport system protein Kup 2">
    <location>
        <begin position="1"/>
        <end position="621"/>
    </location>
</feature>
<feature type="transmembrane region" description="Helical" evidence="1">
    <location>
        <begin position="9"/>
        <end position="29"/>
    </location>
</feature>
<feature type="transmembrane region" description="Helical" evidence="1">
    <location>
        <begin position="48"/>
        <end position="68"/>
    </location>
</feature>
<feature type="transmembrane region" description="Helical" evidence="1">
    <location>
        <begin position="101"/>
        <end position="121"/>
    </location>
</feature>
<feature type="transmembrane region" description="Helical" evidence="1">
    <location>
        <begin position="136"/>
        <end position="156"/>
    </location>
</feature>
<feature type="transmembrane region" description="Helical" evidence="1">
    <location>
        <begin position="164"/>
        <end position="184"/>
    </location>
</feature>
<feature type="transmembrane region" description="Helical" evidence="1">
    <location>
        <begin position="210"/>
        <end position="230"/>
    </location>
</feature>
<feature type="transmembrane region" description="Helical" evidence="1">
    <location>
        <begin position="246"/>
        <end position="266"/>
    </location>
</feature>
<feature type="transmembrane region" description="Helical" evidence="1">
    <location>
        <begin position="275"/>
        <end position="295"/>
    </location>
</feature>
<feature type="transmembrane region" description="Helical" evidence="1">
    <location>
        <begin position="336"/>
        <end position="356"/>
    </location>
</feature>
<feature type="transmembrane region" description="Helical" evidence="1">
    <location>
        <begin position="364"/>
        <end position="384"/>
    </location>
</feature>
<feature type="transmembrane region" description="Helical" evidence="1">
    <location>
        <begin position="393"/>
        <end position="413"/>
    </location>
</feature>
<feature type="transmembrane region" description="Helical" evidence="1">
    <location>
        <begin position="418"/>
        <end position="438"/>
    </location>
</feature>
<keyword id="KW-0997">Cell inner membrane</keyword>
<keyword id="KW-1003">Cell membrane</keyword>
<keyword id="KW-0406">Ion transport</keyword>
<keyword id="KW-0472">Membrane</keyword>
<keyword id="KW-0630">Potassium</keyword>
<keyword id="KW-0633">Potassium transport</keyword>
<keyword id="KW-1185">Reference proteome</keyword>
<keyword id="KW-0769">Symport</keyword>
<keyword id="KW-0812">Transmembrane</keyword>
<keyword id="KW-1133">Transmembrane helix</keyword>
<keyword id="KW-0813">Transport</keyword>